<reference key="1">
    <citation type="submission" date="1997-05" db="EMBL/GenBank/DDBJ databases">
        <title>Expression cloning of a cDNA encoding a ganglioside expression factor-2 (GEF-2).</title>
        <authorList>
            <person name="Ogura K."/>
        </authorList>
    </citation>
    <scope>NUCLEOTIDE SEQUENCE [MRNA]</scope>
    <source>
        <strain>Wistar</strain>
        <tissue>Brain</tissue>
    </source>
</reference>
<reference key="2">
    <citation type="journal article" date="2004" name="Genome Res.">
        <title>The status, quality, and expansion of the NIH full-length cDNA project: the Mammalian Gene Collection (MGC).</title>
        <authorList>
            <consortium name="The MGC Project Team"/>
        </authorList>
    </citation>
    <scope>NUCLEOTIDE SEQUENCE [LARGE SCALE MRNA]</scope>
    <source>
        <tissue>Liver</tissue>
        <tissue>Pituitary</tissue>
    </source>
</reference>
<name>GBRL2_RAT</name>
<comment type="function">
    <text evidence="1 2">Ubiquitin-like modifier involved in intra-Golgi traffic. Modulates intra-Golgi transport through coupling between NSF activity and SNAREs activation. It first stimulates the ATPase activity of NSF which in turn stimulates the association with GOSR1 (By similarity). Involved in autophagy. Plays a role in mitophagy which contributes to regulate mitochondrial quantity and quality by eliminating the mitochondria to a basal level to fulfill cellular energy requirements and preventing excess ROS production. Whereas LC3s are involved in elongation of the phagophore membrane, the GABARAP/GATE-16 subfamily is essential for a later stage in autophagosome maturation (By similarity).</text>
</comment>
<comment type="subunit">
    <text evidence="1 2 3">Monomer. Interacts with ATG3, ATG7, ATG13 and ULK1. Interacts with TP53INP1 and TP53INP2. Interacts with TBC1D25. Directly interacts with SQSTM1 and BNIP3. Interacts with TECPR2 and PCM1. Interacts with TBC1D5. Interacts with TRIM5. Interacts with MEFV and TRIM21. Interacts with WDFY3. Interacts with UBA5; promoting recruitment of UBA5 to the endoplasmic reticulum membrane. Interacts with GOSR1. Interacts with KBTBD6 and KBTBD7; the interaction is direct. Interacts with reticulophagy regulators RETREG1, RETREG2 and RETREG3. Interacts with IRGM (By similarity). Interacts with DNM2 (By similarity). Interacts with NCOA4 (By similarity). Interacts with IRGQ (By similarity).</text>
</comment>
<comment type="subcellular location">
    <subcellularLocation>
        <location evidence="2">Cytoplasmic vesicle</location>
        <location evidence="2">Autophagosome</location>
    </subcellularLocation>
    <subcellularLocation>
        <location evidence="2">Endoplasmic reticulum membrane</location>
    </subcellularLocation>
    <subcellularLocation>
        <location evidence="1">Golgi apparatus</location>
    </subcellularLocation>
</comment>
<comment type="PTM">
    <text evidence="2 3">The precursor molecule is cleaved by ATG4 (ATG4A, ATG4B, ATG4C or ATG4D) to expose the glycine at the C-terminus and form the cytosolic form, GABARAPL2-I. The processed form is then activated by APG7L/ATG7, transferred to ATG3 and conjugated to phosphatidylethanolamine (PE) phospholipid to form the membrane-bound form, GABARAPL2-II. During non-canonical autophagy, the processed form is conjugated to phosphatidylserine (PS) phospholipid. ATG4 proteins also mediate the delipidation of PE-conjugated forms required for GABARAPL2 recycling when autophagosomes fuse with lysosomes. In addition, ATG4B and ATG4D mediate delipidation of ATG8 proteins conjugated to PS during non-canonical autophagy. ATG4B constitutes the major protein for proteolytic activation (By similarity). ATG4D is the main enzyme for delipidation activity (By similarity).</text>
</comment>
<comment type="PTM">
    <text evidence="2">Phosphorylation at Ser-87 and Ser-88 by TBK1 prevents interaction with ATG4 (ATG4A, ATG4B, ATG4C or ATG4D). Phosphorylation by TBK1 on autophagosomes prevents their delipidation by ATG4 and premature removal from nascent autophagosomes.</text>
</comment>
<comment type="similarity">
    <text evidence="4">Belongs to the ATG8 family.</text>
</comment>
<evidence type="ECO:0000250" key="1">
    <source>
        <dbReference type="UniProtKB" id="P60519"/>
    </source>
</evidence>
<evidence type="ECO:0000250" key="2">
    <source>
        <dbReference type="UniProtKB" id="P60520"/>
    </source>
</evidence>
<evidence type="ECO:0000250" key="3">
    <source>
        <dbReference type="UniProtKB" id="P60521"/>
    </source>
</evidence>
<evidence type="ECO:0000305" key="4"/>
<evidence type="ECO:0000312" key="5">
    <source>
        <dbReference type="RGD" id="620510"/>
    </source>
</evidence>
<dbReference type="EMBL" id="AB003515">
    <property type="protein sequence ID" value="BAA19975.1"/>
    <property type="molecule type" value="mRNA"/>
</dbReference>
<dbReference type="EMBL" id="BC058145">
    <property type="protein sequence ID" value="AAH58145.1"/>
    <property type="molecule type" value="mRNA"/>
</dbReference>
<dbReference type="EMBL" id="BC088139">
    <property type="protein sequence ID" value="AAH88139.1"/>
    <property type="molecule type" value="mRNA"/>
</dbReference>
<dbReference type="RefSeq" id="NP_073197.1">
    <property type="nucleotide sequence ID" value="NM_022706.2"/>
</dbReference>
<dbReference type="RefSeq" id="XP_002729993.3">
    <property type="nucleotide sequence ID" value="XM_002729947.5"/>
</dbReference>
<dbReference type="SMR" id="P60522"/>
<dbReference type="CORUM" id="P60522"/>
<dbReference type="FunCoup" id="P60522">
    <property type="interactions" value="2287"/>
</dbReference>
<dbReference type="STRING" id="10116.ENSRNOP00000040067"/>
<dbReference type="PhosphoSitePlus" id="P60522"/>
<dbReference type="jPOST" id="P60522"/>
<dbReference type="PaxDb" id="10116-ENSRNOP00000040067"/>
<dbReference type="Ensembl" id="ENSRNOT00000047078.5">
    <property type="protein sequence ID" value="ENSRNOP00000092094.1"/>
    <property type="gene ID" value="ENSRNOG00000051416.2"/>
</dbReference>
<dbReference type="Ensembl" id="ENSRNOT00000048998.4">
    <property type="protein sequence ID" value="ENSRNOP00000040067.3"/>
    <property type="gene ID" value="ENSRNOG00000019425.6"/>
</dbReference>
<dbReference type="GeneID" id="64670"/>
<dbReference type="KEGG" id="rno:64670"/>
<dbReference type="UCSC" id="RGD:620510">
    <property type="organism name" value="rat"/>
</dbReference>
<dbReference type="AGR" id="RGD:2323108"/>
<dbReference type="AGR" id="RGD:620510"/>
<dbReference type="CTD" id="11345"/>
<dbReference type="RGD" id="620510">
    <property type="gene designation" value="Gabarapl2"/>
</dbReference>
<dbReference type="eggNOG" id="KOG1654">
    <property type="taxonomic scope" value="Eukaryota"/>
</dbReference>
<dbReference type="GeneTree" id="ENSGT00940000155010"/>
<dbReference type="HOGENOM" id="CLU_119276_0_1_1"/>
<dbReference type="InParanoid" id="P60522"/>
<dbReference type="OMA" id="AKMKWMF"/>
<dbReference type="OrthoDB" id="6738456at2759"/>
<dbReference type="PhylomeDB" id="P60522"/>
<dbReference type="TreeFam" id="TF312964"/>
<dbReference type="Reactome" id="R-RNO-1632852">
    <property type="pathway name" value="Macroautophagy"/>
</dbReference>
<dbReference type="Reactome" id="R-RNO-8854214">
    <property type="pathway name" value="TBC/RABGAPs"/>
</dbReference>
<dbReference type="PRO" id="PR:P60522"/>
<dbReference type="Proteomes" id="UP000002494">
    <property type="component" value="Chromosome 19"/>
</dbReference>
<dbReference type="Proteomes" id="UP000002494">
    <property type="component" value="Chromosome 8"/>
</dbReference>
<dbReference type="Bgee" id="ENSRNOG00000019425">
    <property type="expression patterns" value="Expressed in cerebellum and 19 other cell types or tissues"/>
</dbReference>
<dbReference type="GO" id="GO:0005776">
    <property type="term" value="C:autophagosome"/>
    <property type="evidence" value="ECO:0000250"/>
    <property type="project" value="UniProtKB"/>
</dbReference>
<dbReference type="GO" id="GO:0000421">
    <property type="term" value="C:autophagosome membrane"/>
    <property type="evidence" value="ECO:0000266"/>
    <property type="project" value="RGD"/>
</dbReference>
<dbReference type="GO" id="GO:0005737">
    <property type="term" value="C:cytoplasm"/>
    <property type="evidence" value="ECO:0000266"/>
    <property type="project" value="RGD"/>
</dbReference>
<dbReference type="GO" id="GO:0031410">
    <property type="term" value="C:cytoplasmic vesicle"/>
    <property type="evidence" value="ECO:0007669"/>
    <property type="project" value="UniProtKB-KW"/>
</dbReference>
<dbReference type="GO" id="GO:0005789">
    <property type="term" value="C:endoplasmic reticulum membrane"/>
    <property type="evidence" value="ECO:0007669"/>
    <property type="project" value="UniProtKB-SubCell"/>
</dbReference>
<dbReference type="GO" id="GO:0005794">
    <property type="term" value="C:Golgi apparatus"/>
    <property type="evidence" value="ECO:0000266"/>
    <property type="project" value="RGD"/>
</dbReference>
<dbReference type="GO" id="GO:0000139">
    <property type="term" value="C:Golgi membrane"/>
    <property type="evidence" value="ECO:0000266"/>
    <property type="project" value="RGD"/>
</dbReference>
<dbReference type="GO" id="GO:0008429">
    <property type="term" value="F:phosphatidylethanolamine binding"/>
    <property type="evidence" value="ECO:0000266"/>
    <property type="project" value="RGD"/>
</dbReference>
<dbReference type="GO" id="GO:0031625">
    <property type="term" value="F:ubiquitin protein ligase binding"/>
    <property type="evidence" value="ECO:0000266"/>
    <property type="project" value="RGD"/>
</dbReference>
<dbReference type="GO" id="GO:0000045">
    <property type="term" value="P:autophagosome assembly"/>
    <property type="evidence" value="ECO:0000318"/>
    <property type="project" value="GO_Central"/>
</dbReference>
<dbReference type="GO" id="GO:0097352">
    <property type="term" value="P:autophagosome maturation"/>
    <property type="evidence" value="ECO:0000318"/>
    <property type="project" value="GO_Central"/>
</dbReference>
<dbReference type="GO" id="GO:0006995">
    <property type="term" value="P:cellular response to nitrogen starvation"/>
    <property type="evidence" value="ECO:0000318"/>
    <property type="project" value="GO_Central"/>
</dbReference>
<dbReference type="GO" id="GO:0000423">
    <property type="term" value="P:mitophagy"/>
    <property type="evidence" value="ECO:0000318"/>
    <property type="project" value="GO_Central"/>
</dbReference>
<dbReference type="GO" id="GO:1901799">
    <property type="term" value="P:negative regulation of proteasomal protein catabolic process"/>
    <property type="evidence" value="ECO:0000266"/>
    <property type="project" value="RGD"/>
</dbReference>
<dbReference type="GO" id="GO:0070972">
    <property type="term" value="P:protein localization to endoplasmic reticulum"/>
    <property type="evidence" value="ECO:0000250"/>
    <property type="project" value="UniProtKB"/>
</dbReference>
<dbReference type="GO" id="GO:0015031">
    <property type="term" value="P:protein transport"/>
    <property type="evidence" value="ECO:0007669"/>
    <property type="project" value="UniProtKB-KW"/>
</dbReference>
<dbReference type="CDD" id="cd17163">
    <property type="entry name" value="Ubl_ATG8_GABARAPL2"/>
    <property type="match status" value="1"/>
</dbReference>
<dbReference type="FunFam" id="3.10.20.90:FF:000077">
    <property type="entry name" value="gamma-aminobutyric acid receptor-associated protein-like 2"/>
    <property type="match status" value="1"/>
</dbReference>
<dbReference type="Gene3D" id="3.10.20.90">
    <property type="entry name" value="Phosphatidylinositol 3-kinase Catalytic Subunit, Chain A, domain 1"/>
    <property type="match status" value="1"/>
</dbReference>
<dbReference type="InterPro" id="IPR004241">
    <property type="entry name" value="Atg8-like"/>
</dbReference>
<dbReference type="InterPro" id="IPR029071">
    <property type="entry name" value="Ubiquitin-like_domsf"/>
</dbReference>
<dbReference type="PANTHER" id="PTHR10969">
    <property type="entry name" value="MICROTUBULE-ASSOCIATED PROTEINS 1A/1B LIGHT CHAIN 3-RELATED"/>
    <property type="match status" value="1"/>
</dbReference>
<dbReference type="Pfam" id="PF02991">
    <property type="entry name" value="ATG8"/>
    <property type="match status" value="1"/>
</dbReference>
<dbReference type="SUPFAM" id="SSF54236">
    <property type="entry name" value="Ubiquitin-like"/>
    <property type="match status" value="1"/>
</dbReference>
<accession>P60522</accession>
<accession>O08765</accession>
<accession>Q9DCP8</accession>
<accession>Q9UQF7</accession>
<proteinExistence type="inferred from homology"/>
<keyword id="KW-0007">Acetylation</keyword>
<keyword id="KW-0072">Autophagy</keyword>
<keyword id="KW-0968">Cytoplasmic vesicle</keyword>
<keyword id="KW-0256">Endoplasmic reticulum</keyword>
<keyword id="KW-0333">Golgi apparatus</keyword>
<keyword id="KW-0449">Lipoprotein</keyword>
<keyword id="KW-0472">Membrane</keyword>
<keyword id="KW-0597">Phosphoprotein</keyword>
<keyword id="KW-0653">Protein transport</keyword>
<keyword id="KW-1185">Reference proteome</keyword>
<keyword id="KW-0813">Transport</keyword>
<sequence>MKWMFKEDHSLEHRCVESAKIRAKYPDRVPVIVEKVSGSQIVDIDKRKYLVPSDITVAQFMWIIRKRIQLPSEKAIFLFVDKTVPQSSLTMGQLYEKEKDEDGFLYVAYSGENTFGF</sequence>
<gene>
    <name evidence="5" type="primary">Gabarapl2</name>
    <name type="synonym">Gef2</name>
</gene>
<protein>
    <recommendedName>
        <fullName evidence="4">Gamma-aminobutyric acid receptor-associated protein-like 2</fullName>
    </recommendedName>
    <alternativeName>
        <fullName>GABA(A) receptor-associated protein-like 2</fullName>
    </alternativeName>
    <alternativeName>
        <fullName>Ganglioside expression factor 2</fullName>
        <shortName>GEF-2</shortName>
    </alternativeName>
    <alternativeName>
        <fullName>Golgi-associated ATPase enhancer of 16 kDa</fullName>
        <shortName>GATE-16</shortName>
    </alternativeName>
</protein>
<feature type="chain" id="PRO_0000212375" description="Gamma-aminobutyric acid receptor-associated protein-like 2">
    <location>
        <begin position="1"/>
        <end position="116"/>
    </location>
</feature>
<feature type="propeptide" id="PRO_0000423072" description="Removed in mature form" evidence="2">
    <location>
        <position position="117"/>
    </location>
</feature>
<feature type="site" description="Cleavage; by ATG4" evidence="2">
    <location>
        <begin position="116"/>
        <end position="117"/>
    </location>
</feature>
<feature type="modified residue" description="N6-acetyllysine" evidence="2">
    <location>
        <position position="24"/>
    </location>
</feature>
<feature type="modified residue" description="Phosphoserine" evidence="2">
    <location>
        <position position="39"/>
    </location>
</feature>
<feature type="modified residue" description="Phosphoserine" evidence="2">
    <location>
        <position position="87"/>
    </location>
</feature>
<feature type="modified residue" description="Phosphoserine" evidence="2">
    <location>
        <position position="88"/>
    </location>
</feature>
<feature type="lipid moiety-binding region" description="Phosphatidylethanolamine amidated glycine; alternate" evidence="2">
    <location>
        <position position="116"/>
    </location>
</feature>
<feature type="lipid moiety-binding region" description="Phosphatidylserine amidated glycine; alternate" evidence="2">
    <location>
        <position position="116"/>
    </location>
</feature>
<organism>
    <name type="scientific">Rattus norvegicus</name>
    <name type="common">Rat</name>
    <dbReference type="NCBI Taxonomy" id="10116"/>
    <lineage>
        <taxon>Eukaryota</taxon>
        <taxon>Metazoa</taxon>
        <taxon>Chordata</taxon>
        <taxon>Craniata</taxon>
        <taxon>Vertebrata</taxon>
        <taxon>Euteleostomi</taxon>
        <taxon>Mammalia</taxon>
        <taxon>Eutheria</taxon>
        <taxon>Euarchontoglires</taxon>
        <taxon>Glires</taxon>
        <taxon>Rodentia</taxon>
        <taxon>Myomorpha</taxon>
        <taxon>Muroidea</taxon>
        <taxon>Muridae</taxon>
        <taxon>Murinae</taxon>
        <taxon>Rattus</taxon>
    </lineage>
</organism>